<accession>A3PVE3</accession>
<comment type="subunit">
    <text evidence="1">Part of the 50S ribosomal subunit.</text>
</comment>
<comment type="similarity">
    <text evidence="1">Belongs to the universal ribosomal protein uL30 family.</text>
</comment>
<keyword id="KW-0687">Ribonucleoprotein</keyword>
<keyword id="KW-0689">Ribosomal protein</keyword>
<organism>
    <name type="scientific">Mycobacterium sp. (strain JLS)</name>
    <dbReference type="NCBI Taxonomy" id="164757"/>
    <lineage>
        <taxon>Bacteria</taxon>
        <taxon>Bacillati</taxon>
        <taxon>Actinomycetota</taxon>
        <taxon>Actinomycetes</taxon>
        <taxon>Mycobacteriales</taxon>
        <taxon>Mycobacteriaceae</taxon>
        <taxon>Mycobacterium</taxon>
    </lineage>
</organism>
<name>RL30_MYCSJ</name>
<sequence>MAELKITQVRGTIGARWNQRESLRTLGLRKIRQSVVREDNAQTRGLIKTVHHLVVVEEV</sequence>
<feature type="chain" id="PRO_1000056076" description="Large ribosomal subunit protein uL30">
    <location>
        <begin position="1"/>
        <end position="59"/>
    </location>
</feature>
<protein>
    <recommendedName>
        <fullName evidence="1">Large ribosomal subunit protein uL30</fullName>
    </recommendedName>
    <alternativeName>
        <fullName evidence="2">50S ribosomal protein L30</fullName>
    </alternativeName>
</protein>
<dbReference type="EMBL" id="CP000580">
    <property type="protein sequence ID" value="ABN96870.1"/>
    <property type="molecule type" value="Genomic_DNA"/>
</dbReference>
<dbReference type="SMR" id="A3PVE3"/>
<dbReference type="KEGG" id="mjl:Mjls_1062"/>
<dbReference type="HOGENOM" id="CLU_131047_2_0_11"/>
<dbReference type="BioCyc" id="MSP164757:G1G8C-1075-MONOMER"/>
<dbReference type="GO" id="GO:0022625">
    <property type="term" value="C:cytosolic large ribosomal subunit"/>
    <property type="evidence" value="ECO:0007669"/>
    <property type="project" value="TreeGrafter"/>
</dbReference>
<dbReference type="GO" id="GO:0003735">
    <property type="term" value="F:structural constituent of ribosome"/>
    <property type="evidence" value="ECO:0007669"/>
    <property type="project" value="InterPro"/>
</dbReference>
<dbReference type="GO" id="GO:0006412">
    <property type="term" value="P:translation"/>
    <property type="evidence" value="ECO:0007669"/>
    <property type="project" value="UniProtKB-UniRule"/>
</dbReference>
<dbReference type="CDD" id="cd01658">
    <property type="entry name" value="Ribosomal_L30"/>
    <property type="match status" value="1"/>
</dbReference>
<dbReference type="FunFam" id="3.30.1390.20:FF:000001">
    <property type="entry name" value="50S ribosomal protein L30"/>
    <property type="match status" value="1"/>
</dbReference>
<dbReference type="Gene3D" id="3.30.1390.20">
    <property type="entry name" value="Ribosomal protein L30, ferredoxin-like fold domain"/>
    <property type="match status" value="1"/>
</dbReference>
<dbReference type="HAMAP" id="MF_01371_B">
    <property type="entry name" value="Ribosomal_uL30_B"/>
    <property type="match status" value="1"/>
</dbReference>
<dbReference type="InterPro" id="IPR036919">
    <property type="entry name" value="Ribo_uL30_ferredoxin-like_sf"/>
</dbReference>
<dbReference type="InterPro" id="IPR005996">
    <property type="entry name" value="Ribosomal_uL30_bac-type"/>
</dbReference>
<dbReference type="InterPro" id="IPR018038">
    <property type="entry name" value="Ribosomal_uL30_CS"/>
</dbReference>
<dbReference type="InterPro" id="IPR016082">
    <property type="entry name" value="Ribosomal_uL30_ferredoxin-like"/>
</dbReference>
<dbReference type="NCBIfam" id="TIGR01308">
    <property type="entry name" value="rpmD_bact"/>
    <property type="match status" value="1"/>
</dbReference>
<dbReference type="PANTHER" id="PTHR15892:SF2">
    <property type="entry name" value="LARGE RIBOSOMAL SUBUNIT PROTEIN UL30M"/>
    <property type="match status" value="1"/>
</dbReference>
<dbReference type="PANTHER" id="PTHR15892">
    <property type="entry name" value="MITOCHONDRIAL RIBOSOMAL PROTEIN L30"/>
    <property type="match status" value="1"/>
</dbReference>
<dbReference type="Pfam" id="PF00327">
    <property type="entry name" value="Ribosomal_L30"/>
    <property type="match status" value="1"/>
</dbReference>
<dbReference type="PIRSF" id="PIRSF002211">
    <property type="entry name" value="Ribosomal_L30_bac-type"/>
    <property type="match status" value="1"/>
</dbReference>
<dbReference type="SUPFAM" id="SSF55129">
    <property type="entry name" value="Ribosomal protein L30p/L7e"/>
    <property type="match status" value="1"/>
</dbReference>
<dbReference type="PROSITE" id="PS00634">
    <property type="entry name" value="RIBOSOMAL_L30"/>
    <property type="match status" value="1"/>
</dbReference>
<reference key="1">
    <citation type="submission" date="2007-02" db="EMBL/GenBank/DDBJ databases">
        <title>Complete sequence of Mycobacterium sp. JLS.</title>
        <authorList>
            <consortium name="US DOE Joint Genome Institute"/>
            <person name="Copeland A."/>
            <person name="Lucas S."/>
            <person name="Lapidus A."/>
            <person name="Barry K."/>
            <person name="Detter J.C."/>
            <person name="Glavina del Rio T."/>
            <person name="Hammon N."/>
            <person name="Israni S."/>
            <person name="Dalin E."/>
            <person name="Tice H."/>
            <person name="Pitluck S."/>
            <person name="Chain P."/>
            <person name="Malfatti S."/>
            <person name="Shin M."/>
            <person name="Vergez L."/>
            <person name="Schmutz J."/>
            <person name="Larimer F."/>
            <person name="Land M."/>
            <person name="Hauser L."/>
            <person name="Kyrpides N."/>
            <person name="Mikhailova N."/>
            <person name="Miller C.D."/>
            <person name="Anderson A.J."/>
            <person name="Sims R.C."/>
            <person name="Richardson P."/>
        </authorList>
    </citation>
    <scope>NUCLEOTIDE SEQUENCE [LARGE SCALE GENOMIC DNA]</scope>
    <source>
        <strain>JLS</strain>
    </source>
</reference>
<evidence type="ECO:0000255" key="1">
    <source>
        <dbReference type="HAMAP-Rule" id="MF_01371"/>
    </source>
</evidence>
<evidence type="ECO:0000305" key="2"/>
<proteinExistence type="inferred from homology"/>
<gene>
    <name evidence="1" type="primary">rpmD</name>
    <name type="ordered locus">Mjls_1062</name>
</gene>